<comment type="function">
    <text evidence="1">The phosphorylation of phosphatidylinositol (PI) to PI4P is the first committed step in the generation of phosphatidylinositol 4,5-bisphosphate (PIP2), a precursor of the second messenger inositol 1,4,5-trisphosphate (InsP3).</text>
</comment>
<comment type="catalytic activity">
    <reaction>
        <text>a 1,2-diacyl-sn-glycero-3-phospho-(1D-myo-inositol) + ATP = a 1,2-diacyl-sn-glycero-3-phospho-(1D-myo-inositol 4-phosphate) + ADP + H(+)</text>
        <dbReference type="Rhea" id="RHEA:19877"/>
        <dbReference type="ChEBI" id="CHEBI:15378"/>
        <dbReference type="ChEBI" id="CHEBI:30616"/>
        <dbReference type="ChEBI" id="CHEBI:57880"/>
        <dbReference type="ChEBI" id="CHEBI:58178"/>
        <dbReference type="ChEBI" id="CHEBI:456216"/>
        <dbReference type="EC" id="2.7.1.67"/>
    </reaction>
</comment>
<comment type="similarity">
    <text evidence="5">Belongs to the PI3/PI4-kinase family. Type II PI4K subfamily.</text>
</comment>
<comment type="sequence caution" evidence="5">
    <conflict type="erroneous initiation">
        <sequence resource="EMBL-CDS" id="AAF81291"/>
    </conflict>
    <text>Truncated N-terminus.</text>
</comment>
<reference key="1">
    <citation type="journal article" date="2000" name="Nature">
        <title>Sequence and analysis of chromosome 1 of the plant Arabidopsis thaliana.</title>
        <authorList>
            <person name="Theologis A."/>
            <person name="Ecker J.R."/>
            <person name="Palm C.J."/>
            <person name="Federspiel N.A."/>
            <person name="Kaul S."/>
            <person name="White O."/>
            <person name="Alonso J."/>
            <person name="Altafi H."/>
            <person name="Araujo R."/>
            <person name="Bowman C.L."/>
            <person name="Brooks S.Y."/>
            <person name="Buehler E."/>
            <person name="Chan A."/>
            <person name="Chao Q."/>
            <person name="Chen H."/>
            <person name="Cheuk R.F."/>
            <person name="Chin C.W."/>
            <person name="Chung M.K."/>
            <person name="Conn L."/>
            <person name="Conway A.B."/>
            <person name="Conway A.R."/>
            <person name="Creasy T.H."/>
            <person name="Dewar K."/>
            <person name="Dunn P."/>
            <person name="Etgu P."/>
            <person name="Feldblyum T.V."/>
            <person name="Feng J.-D."/>
            <person name="Fong B."/>
            <person name="Fujii C.Y."/>
            <person name="Gill J.E."/>
            <person name="Goldsmith A.D."/>
            <person name="Haas B."/>
            <person name="Hansen N.F."/>
            <person name="Hughes B."/>
            <person name="Huizar L."/>
            <person name="Hunter J.L."/>
            <person name="Jenkins J."/>
            <person name="Johnson-Hopson C."/>
            <person name="Khan S."/>
            <person name="Khaykin E."/>
            <person name="Kim C.J."/>
            <person name="Koo H.L."/>
            <person name="Kremenetskaia I."/>
            <person name="Kurtz D.B."/>
            <person name="Kwan A."/>
            <person name="Lam B."/>
            <person name="Langin-Hooper S."/>
            <person name="Lee A."/>
            <person name="Lee J.M."/>
            <person name="Lenz C.A."/>
            <person name="Li J.H."/>
            <person name="Li Y.-P."/>
            <person name="Lin X."/>
            <person name="Liu S.X."/>
            <person name="Liu Z.A."/>
            <person name="Luros J.S."/>
            <person name="Maiti R."/>
            <person name="Marziali A."/>
            <person name="Militscher J."/>
            <person name="Miranda M."/>
            <person name="Nguyen M."/>
            <person name="Nierman W.C."/>
            <person name="Osborne B.I."/>
            <person name="Pai G."/>
            <person name="Peterson J."/>
            <person name="Pham P.K."/>
            <person name="Rizzo M."/>
            <person name="Rooney T."/>
            <person name="Rowley D."/>
            <person name="Sakano H."/>
            <person name="Salzberg S.L."/>
            <person name="Schwartz J.R."/>
            <person name="Shinn P."/>
            <person name="Southwick A.M."/>
            <person name="Sun H."/>
            <person name="Tallon L.J."/>
            <person name="Tambunga G."/>
            <person name="Toriumi M.J."/>
            <person name="Town C.D."/>
            <person name="Utterback T."/>
            <person name="Van Aken S."/>
            <person name="Vaysberg M."/>
            <person name="Vysotskaia V.S."/>
            <person name="Walker M."/>
            <person name="Wu D."/>
            <person name="Yu G."/>
            <person name="Fraser C.M."/>
            <person name="Venter J.C."/>
            <person name="Davis R.W."/>
        </authorList>
    </citation>
    <scope>NUCLEOTIDE SEQUENCE [LARGE SCALE GENOMIC DNA]</scope>
    <source>
        <strain>cv. Columbia</strain>
    </source>
</reference>
<reference key="2">
    <citation type="journal article" date="2017" name="Plant J.">
        <title>Araport11: a complete reannotation of the Arabidopsis thaliana reference genome.</title>
        <authorList>
            <person name="Cheng C.Y."/>
            <person name="Krishnakumar V."/>
            <person name="Chan A.P."/>
            <person name="Thibaud-Nissen F."/>
            <person name="Schobel S."/>
            <person name="Town C.D."/>
        </authorList>
    </citation>
    <scope>GENOME REANNOTATION</scope>
    <source>
        <strain>cv. Columbia</strain>
    </source>
</reference>
<reference key="3">
    <citation type="journal article" date="2003" name="Science">
        <title>Empirical analysis of transcriptional activity in the Arabidopsis genome.</title>
        <authorList>
            <person name="Yamada K."/>
            <person name="Lim J."/>
            <person name="Dale J.M."/>
            <person name="Chen H."/>
            <person name="Shinn P."/>
            <person name="Palm C.J."/>
            <person name="Southwick A.M."/>
            <person name="Wu H.C."/>
            <person name="Kim C.J."/>
            <person name="Nguyen M."/>
            <person name="Pham P.K."/>
            <person name="Cheuk R.F."/>
            <person name="Karlin-Newmann G."/>
            <person name="Liu S.X."/>
            <person name="Lam B."/>
            <person name="Sakano H."/>
            <person name="Wu T."/>
            <person name="Yu G."/>
            <person name="Miranda M."/>
            <person name="Quach H.L."/>
            <person name="Tripp M."/>
            <person name="Chang C.H."/>
            <person name="Lee J.M."/>
            <person name="Toriumi M.J."/>
            <person name="Chan M.M."/>
            <person name="Tang C.C."/>
            <person name="Onodera C.S."/>
            <person name="Deng J.M."/>
            <person name="Akiyama K."/>
            <person name="Ansari Y."/>
            <person name="Arakawa T."/>
            <person name="Banh J."/>
            <person name="Banno F."/>
            <person name="Bowser L."/>
            <person name="Brooks S.Y."/>
            <person name="Carninci P."/>
            <person name="Chao Q."/>
            <person name="Choy N."/>
            <person name="Enju A."/>
            <person name="Goldsmith A.D."/>
            <person name="Gurjal M."/>
            <person name="Hansen N.F."/>
            <person name="Hayashizaki Y."/>
            <person name="Johnson-Hopson C."/>
            <person name="Hsuan V.W."/>
            <person name="Iida K."/>
            <person name="Karnes M."/>
            <person name="Khan S."/>
            <person name="Koesema E."/>
            <person name="Ishida J."/>
            <person name="Jiang P.X."/>
            <person name="Jones T."/>
            <person name="Kawai J."/>
            <person name="Kamiya A."/>
            <person name="Meyers C."/>
            <person name="Nakajima M."/>
            <person name="Narusaka M."/>
            <person name="Seki M."/>
            <person name="Sakurai T."/>
            <person name="Satou M."/>
            <person name="Tamse R."/>
            <person name="Vaysberg M."/>
            <person name="Wallender E.K."/>
            <person name="Wong C."/>
            <person name="Yamamura Y."/>
            <person name="Yuan S."/>
            <person name="Shinozaki K."/>
            <person name="Davis R.W."/>
            <person name="Theologis A."/>
            <person name="Ecker J.R."/>
        </authorList>
    </citation>
    <scope>NUCLEOTIDE SEQUENCE [LARGE SCALE MRNA]</scope>
    <source>
        <strain>cv. Columbia</strain>
    </source>
</reference>
<reference key="4">
    <citation type="journal article" date="2002" name="Plant Physiol.">
        <title>Inositol phospholipid metabolism in Arabidopsis. Characterized and putative isoforms of inositol phospholipid kinase and phosphoinositide-specific phospholipase C.</title>
        <authorList>
            <person name="Mueller-Roeber B."/>
            <person name="Pical C."/>
        </authorList>
    </citation>
    <scope>GENE FAMILY</scope>
    <scope>NOMENCLATURE</scope>
</reference>
<reference key="5">
    <citation type="journal article" date="2008" name="Biochem. J.">
        <title>Characterization of a new family of protein kinases from Arabidopsis containing phosphoinositide 3/4-kinase and ubiquitin-like domains.</title>
        <authorList>
            <person name="Galvao R.M."/>
            <person name="Kota U."/>
            <person name="Soderblom E.J."/>
            <person name="Goshe M.B."/>
            <person name="Boss W.F."/>
        </authorList>
    </citation>
    <scope>GENE FAMILY</scope>
</reference>
<sequence>MAMAVFKAPLKGEFHGARKMEGKQYKHHLLQQQSTGRRRVFVQTDTGCVLGVELDRNDNVHTVKKRLQIAFNFPTEESSLTFGDMVLKNDLSAVRNDSPLLLKRNLMHRSSSTPCLSPTGNDLQRKDRSGPIEILSHSPCFLSLKQTANDIVKAMKMGVEPIPVNGGLGGAYYFRDEKGQSVAIVKPTDEEPFAPNNPKGFVGKALGQPGLKPSVRVGETGFREVAAYLLDYDHFANVPPTALVKITHSVFNVNDGMDGNKSREKKKLVSSKIASFQKFVPHDFDASDHGTSSFPVASVHRIGILDIRILNTDRHGGNLLVKKLDDGGVGRFGQVELIPIDHGLCLPETLEDPYFEWIHWPQASIPFSEEELDYIQSLDPVKDCEMLRRELPMIREACLRVLVLCTVFLKEAAVFGLCLAEIGEMMTREFRAGEEEPSELEMLCIEAKRLTTEQDVLSPKSDGEGETEFQFDIDYNELDSVYGSETETDEFFAKNPFSNGRSSLGELKESIAEEEEDDEEEAKLTLSLSKLSTSMKNNLSNTMGSGYLKPPKDNQTDKALVSHKSANVQLPLSVNFVKLADMKEVEWVVFLERFQELLYSAFAERKTMTLRNTQRLGTSCKF</sequence>
<proteinExistence type="evidence at transcript level"/>
<dbReference type="EC" id="2.7.1.67"/>
<dbReference type="EMBL" id="AC027656">
    <property type="protein sequence ID" value="AAF81291.1"/>
    <property type="status" value="ALT_INIT"/>
    <property type="molecule type" value="Genomic_DNA"/>
</dbReference>
<dbReference type="EMBL" id="CP002684">
    <property type="protein sequence ID" value="AEE29053.1"/>
    <property type="molecule type" value="Genomic_DNA"/>
</dbReference>
<dbReference type="EMBL" id="CP002684">
    <property type="protein sequence ID" value="ANM59920.1"/>
    <property type="molecule type" value="Genomic_DNA"/>
</dbReference>
<dbReference type="EMBL" id="AY060574">
    <property type="protein sequence ID" value="AAL31202.1"/>
    <property type="molecule type" value="mRNA"/>
</dbReference>
<dbReference type="EMBL" id="AY149944">
    <property type="protein sequence ID" value="AAN31098.1"/>
    <property type="molecule type" value="mRNA"/>
</dbReference>
<dbReference type="PIR" id="F86269">
    <property type="entry name" value="F86269"/>
</dbReference>
<dbReference type="RefSeq" id="NP_001322238.1">
    <property type="nucleotide sequence ID" value="NM_001332079.1"/>
</dbReference>
<dbReference type="RefSeq" id="NP_563930.1">
    <property type="nucleotide sequence ID" value="NM_101234.4"/>
</dbReference>
<dbReference type="SMR" id="Q8W4R8"/>
<dbReference type="FunCoup" id="Q8W4R8">
    <property type="interactions" value="675"/>
</dbReference>
<dbReference type="STRING" id="3702.Q8W4R8"/>
<dbReference type="iPTMnet" id="Q8W4R8"/>
<dbReference type="PaxDb" id="3702-AT1G13640.1"/>
<dbReference type="ProteomicsDB" id="250814"/>
<dbReference type="EnsemblPlants" id="AT1G13640.1">
    <property type="protein sequence ID" value="AT1G13640.1"/>
    <property type="gene ID" value="AT1G13640"/>
</dbReference>
<dbReference type="EnsemblPlants" id="AT1G13640.2">
    <property type="protein sequence ID" value="AT1G13640.2"/>
    <property type="gene ID" value="AT1G13640"/>
</dbReference>
<dbReference type="GeneID" id="837925"/>
<dbReference type="Gramene" id="AT1G13640.1">
    <property type="protein sequence ID" value="AT1G13640.1"/>
    <property type="gene ID" value="AT1G13640"/>
</dbReference>
<dbReference type="Gramene" id="AT1G13640.2">
    <property type="protein sequence ID" value="AT1G13640.2"/>
    <property type="gene ID" value="AT1G13640"/>
</dbReference>
<dbReference type="KEGG" id="ath:AT1G13640"/>
<dbReference type="Araport" id="AT1G13640"/>
<dbReference type="TAIR" id="AT1G13640"/>
<dbReference type="eggNOG" id="KOG2381">
    <property type="taxonomic scope" value="Eukaryota"/>
</dbReference>
<dbReference type="HOGENOM" id="CLU_027241_1_1_1"/>
<dbReference type="InParanoid" id="Q8W4R8"/>
<dbReference type="OMA" id="KRNLMHR"/>
<dbReference type="PhylomeDB" id="Q8W4R8"/>
<dbReference type="PRO" id="PR:Q8W4R8"/>
<dbReference type="Proteomes" id="UP000006548">
    <property type="component" value="Chromosome 1"/>
</dbReference>
<dbReference type="ExpressionAtlas" id="Q8W4R8">
    <property type="expression patterns" value="baseline and differential"/>
</dbReference>
<dbReference type="GO" id="GO:0004430">
    <property type="term" value="F:1-phosphatidylinositol 4-kinase activity"/>
    <property type="evidence" value="ECO:0007669"/>
    <property type="project" value="UniProtKB-EC"/>
</dbReference>
<dbReference type="GO" id="GO:0005524">
    <property type="term" value="F:ATP binding"/>
    <property type="evidence" value="ECO:0007669"/>
    <property type="project" value="UniProtKB-KW"/>
</dbReference>
<dbReference type="CDD" id="cd17039">
    <property type="entry name" value="Ubl_ubiquitin_like"/>
    <property type="match status" value="1"/>
</dbReference>
<dbReference type="InterPro" id="IPR044571">
    <property type="entry name" value="P4KG1-8"/>
</dbReference>
<dbReference type="InterPro" id="IPR000403">
    <property type="entry name" value="PI3/4_kinase_cat_dom"/>
</dbReference>
<dbReference type="InterPro" id="IPR029071">
    <property type="entry name" value="Ubiquitin-like_domsf"/>
</dbReference>
<dbReference type="PANTHER" id="PTHR45800">
    <property type="entry name" value="PHOSPHATIDYLINOSITOL 4-KINASE GAMMA"/>
    <property type="match status" value="1"/>
</dbReference>
<dbReference type="PANTHER" id="PTHR45800:SF32">
    <property type="entry name" value="PHOSPHATIDYLINOSITOL 4-KINASE GAMMA 6"/>
    <property type="match status" value="1"/>
</dbReference>
<dbReference type="Pfam" id="PF00454">
    <property type="entry name" value="PI3_PI4_kinase"/>
    <property type="match status" value="1"/>
</dbReference>
<dbReference type="SUPFAM" id="SSF54236">
    <property type="entry name" value="Ubiquitin-like"/>
    <property type="match status" value="1"/>
</dbReference>
<dbReference type="PROSITE" id="PS50290">
    <property type="entry name" value="PI3_4_KINASE_3"/>
    <property type="match status" value="1"/>
</dbReference>
<protein>
    <recommendedName>
        <fullName>Phosphatidylinositol 4-kinase gamma 6</fullName>
        <shortName>AtPI4Kgamma6</shortName>
        <shortName>PI-4Kgamma6</shortName>
        <shortName>PI4K gamma 6</shortName>
        <ecNumber>2.7.1.67</ecNumber>
    </recommendedName>
</protein>
<accession>Q8W4R8</accession>
<accession>Q9LMY3</accession>
<organism>
    <name type="scientific">Arabidopsis thaliana</name>
    <name type="common">Mouse-ear cress</name>
    <dbReference type="NCBI Taxonomy" id="3702"/>
    <lineage>
        <taxon>Eukaryota</taxon>
        <taxon>Viridiplantae</taxon>
        <taxon>Streptophyta</taxon>
        <taxon>Embryophyta</taxon>
        <taxon>Tracheophyta</taxon>
        <taxon>Spermatophyta</taxon>
        <taxon>Magnoliopsida</taxon>
        <taxon>eudicotyledons</taxon>
        <taxon>Gunneridae</taxon>
        <taxon>Pentapetalae</taxon>
        <taxon>rosids</taxon>
        <taxon>malvids</taxon>
        <taxon>Brassicales</taxon>
        <taxon>Brassicaceae</taxon>
        <taxon>Camelineae</taxon>
        <taxon>Arabidopsis</taxon>
    </lineage>
</organism>
<evidence type="ECO:0000250" key="1"/>
<evidence type="ECO:0000250" key="2">
    <source>
        <dbReference type="UniProtKB" id="Q9BTU6"/>
    </source>
</evidence>
<evidence type="ECO:0000250" key="3">
    <source>
        <dbReference type="UniProtKB" id="Q9C671"/>
    </source>
</evidence>
<evidence type="ECO:0000255" key="4">
    <source>
        <dbReference type="PROSITE-ProRule" id="PRU00269"/>
    </source>
</evidence>
<evidence type="ECO:0000305" key="5"/>
<name>P4KG6_ARATH</name>
<gene>
    <name type="primary">PI4KG6</name>
    <name type="synonym">PI4KGAMMA6</name>
    <name type="ordered locus">At1g13640</name>
    <name type="ORF">F21F23.8</name>
</gene>
<keyword id="KW-0067">ATP-binding</keyword>
<keyword id="KW-0418">Kinase</keyword>
<keyword id="KW-0547">Nucleotide-binding</keyword>
<keyword id="KW-0597">Phosphoprotein</keyword>
<keyword id="KW-1185">Reference proteome</keyword>
<keyword id="KW-0808">Transferase</keyword>
<feature type="chain" id="PRO_0000423363" description="Phosphatidylinositol 4-kinase gamma 6">
    <location>
        <begin position="1"/>
        <end position="622"/>
    </location>
</feature>
<feature type="domain" description="Ubiquitin-like; degenerate">
    <location>
        <begin position="38"/>
        <end position="95"/>
    </location>
</feature>
<feature type="domain" description="PI3K/PI4K catalytic" evidence="4">
    <location>
        <begin position="158"/>
        <end position="459"/>
    </location>
</feature>
<feature type="region of interest" description="G-loop" evidence="4">
    <location>
        <begin position="164"/>
        <end position="170"/>
    </location>
</feature>
<feature type="region of interest" description="Catalytic loop" evidence="4">
    <location>
        <begin position="310"/>
        <end position="318"/>
    </location>
</feature>
<feature type="region of interest" description="Activation loop" evidence="4">
    <location>
        <begin position="339"/>
        <end position="365"/>
    </location>
</feature>
<feature type="binding site" evidence="2">
    <location>
        <begin position="165"/>
        <end position="171"/>
    </location>
    <ligand>
        <name>ATP</name>
        <dbReference type="ChEBI" id="CHEBI:30616"/>
    </ligand>
</feature>
<feature type="binding site" evidence="2">
    <location>
        <position position="186"/>
    </location>
    <ligand>
        <name>ATP</name>
        <dbReference type="ChEBI" id="CHEBI:30616"/>
    </ligand>
</feature>
<feature type="binding site" evidence="2">
    <location>
        <begin position="277"/>
        <end position="280"/>
    </location>
    <ligand>
        <name>ATP</name>
        <dbReference type="ChEBI" id="CHEBI:30616"/>
    </ligand>
</feature>
<feature type="binding site" evidence="2">
    <location>
        <position position="341"/>
    </location>
    <ligand>
        <name>ATP</name>
        <dbReference type="ChEBI" id="CHEBI:30616"/>
    </ligand>
</feature>
<feature type="modified residue" description="Phosphoserine" evidence="3">
    <location>
        <position position="565"/>
    </location>
</feature>